<comment type="function">
    <text evidence="1">Cleaves the N-terminal amino acid of tripeptides.</text>
</comment>
<comment type="catalytic activity">
    <reaction evidence="1">
        <text>Release of the N-terminal residue from a tripeptide.</text>
        <dbReference type="EC" id="3.4.11.4"/>
    </reaction>
</comment>
<comment type="cofactor">
    <cofactor evidence="1">
        <name>Zn(2+)</name>
        <dbReference type="ChEBI" id="CHEBI:29105"/>
    </cofactor>
    <text evidence="1">Binds 2 Zn(2+) ions per subunit.</text>
</comment>
<comment type="subcellular location">
    <subcellularLocation>
        <location evidence="1">Cytoplasm</location>
    </subcellularLocation>
</comment>
<comment type="similarity">
    <text evidence="1">Belongs to the peptidase M20B family.</text>
</comment>
<comment type="sequence caution" evidence="2">
    <conflict type="erroneous initiation">
        <sequence resource="EMBL-CDS" id="BAC64416"/>
    </conflict>
</comment>
<proteinExistence type="inferred from homology"/>
<organism>
    <name type="scientific">Streptococcus pyogenes serotype M3 (strain SSI-1)</name>
    <dbReference type="NCBI Taxonomy" id="193567"/>
    <lineage>
        <taxon>Bacteria</taxon>
        <taxon>Bacillati</taxon>
        <taxon>Bacillota</taxon>
        <taxon>Bacilli</taxon>
        <taxon>Lactobacillales</taxon>
        <taxon>Streptococcaceae</taxon>
        <taxon>Streptococcus</taxon>
    </lineage>
</organism>
<sequence length="407" mass="45022">MKYDNLLDRFIKYVKVNTRSDPDSETTPSTESQEAFALTILKPEMEAIGLQDVHYNPVNGYLIGTLPANNPTLTRKIGFIAHMDTADFNAENVNPQIIDNYQGGDITLGSSNYKLDPKAFPNLNNYIGQTLITTDGTTLLGADDKSGIAEIMTAIEFLTSQPQIEHCDIKVAFGPDEEIGVGADKFEVADFEVDFAYTMDGGPLGELQYETFSAAALEVTFLGRNVHPGTAKDQMINALELAIDFHEKLPAKERPEYTDGYQGFYHLTGLTGTVEEARASYIIRDFEEASFEARKVKVENIAQSMNAHLGTKRVLVELNDQYYNMKKVIEKDMTAIELAKEVMEELAIKPVIEPIRGGTDGSKISFMGIPTPNIFAGGENMHGRFEFVSLQTMERAIDVIIGLVCKA</sequence>
<protein>
    <recommendedName>
        <fullName evidence="1">Peptidase T</fullName>
        <ecNumber evidence="1">3.4.11.4</ecNumber>
    </recommendedName>
    <alternativeName>
        <fullName evidence="1">Aminotripeptidase</fullName>
        <shortName evidence="1">Tripeptidase</shortName>
    </alternativeName>
    <alternativeName>
        <fullName evidence="1">Tripeptide aminopeptidase</fullName>
    </alternativeName>
</protein>
<name>PEPT_STRPQ</name>
<reference key="1">
    <citation type="journal article" date="2003" name="Genome Res.">
        <title>Genome sequence of an M3 strain of Streptococcus pyogenes reveals a large-scale genomic rearrangement in invasive strains and new insights into phage evolution.</title>
        <authorList>
            <person name="Nakagawa I."/>
            <person name="Kurokawa K."/>
            <person name="Yamashita A."/>
            <person name="Nakata M."/>
            <person name="Tomiyasu Y."/>
            <person name="Okahashi N."/>
            <person name="Kawabata S."/>
            <person name="Yamazaki K."/>
            <person name="Shiba T."/>
            <person name="Yasunaga T."/>
            <person name="Hayashi H."/>
            <person name="Hattori M."/>
            <person name="Hamada S."/>
        </authorList>
    </citation>
    <scope>NUCLEOTIDE SEQUENCE [LARGE SCALE GENOMIC DNA]</scope>
    <source>
        <strain>SSI-1</strain>
    </source>
</reference>
<dbReference type="EC" id="3.4.11.4" evidence="1"/>
<dbReference type="EMBL" id="BA000034">
    <property type="protein sequence ID" value="BAC64416.1"/>
    <property type="status" value="ALT_INIT"/>
    <property type="molecule type" value="Genomic_DNA"/>
</dbReference>
<dbReference type="RefSeq" id="WP_011054346.1">
    <property type="nucleotide sequence ID" value="NC_004606.1"/>
</dbReference>
<dbReference type="SMR" id="P0DD01"/>
<dbReference type="MEROPS" id="M20.003"/>
<dbReference type="KEGG" id="sps:SPs1321"/>
<dbReference type="HOGENOM" id="CLU_053676_0_0_9"/>
<dbReference type="GO" id="GO:0005829">
    <property type="term" value="C:cytosol"/>
    <property type="evidence" value="ECO:0007669"/>
    <property type="project" value="TreeGrafter"/>
</dbReference>
<dbReference type="GO" id="GO:0008237">
    <property type="term" value="F:metallopeptidase activity"/>
    <property type="evidence" value="ECO:0007669"/>
    <property type="project" value="UniProtKB-KW"/>
</dbReference>
<dbReference type="GO" id="GO:0045148">
    <property type="term" value="F:tripeptide aminopeptidase activity"/>
    <property type="evidence" value="ECO:0007669"/>
    <property type="project" value="UniProtKB-UniRule"/>
</dbReference>
<dbReference type="GO" id="GO:0008270">
    <property type="term" value="F:zinc ion binding"/>
    <property type="evidence" value="ECO:0007669"/>
    <property type="project" value="UniProtKB-UniRule"/>
</dbReference>
<dbReference type="GO" id="GO:0043171">
    <property type="term" value="P:peptide catabolic process"/>
    <property type="evidence" value="ECO:0007669"/>
    <property type="project" value="UniProtKB-UniRule"/>
</dbReference>
<dbReference type="GO" id="GO:0006508">
    <property type="term" value="P:proteolysis"/>
    <property type="evidence" value="ECO:0007669"/>
    <property type="project" value="UniProtKB-UniRule"/>
</dbReference>
<dbReference type="CDD" id="cd03892">
    <property type="entry name" value="M20_peptT"/>
    <property type="match status" value="1"/>
</dbReference>
<dbReference type="FunFam" id="3.30.70.360:FF:000002">
    <property type="entry name" value="Peptidase T"/>
    <property type="match status" value="1"/>
</dbReference>
<dbReference type="Gene3D" id="3.30.70.360">
    <property type="match status" value="1"/>
</dbReference>
<dbReference type="Gene3D" id="3.40.630.10">
    <property type="entry name" value="Zn peptidases"/>
    <property type="match status" value="1"/>
</dbReference>
<dbReference type="HAMAP" id="MF_00550">
    <property type="entry name" value="Aminopeptidase_M20"/>
    <property type="match status" value="1"/>
</dbReference>
<dbReference type="InterPro" id="IPR001261">
    <property type="entry name" value="ArgE/DapE_CS"/>
</dbReference>
<dbReference type="InterPro" id="IPR036264">
    <property type="entry name" value="Bact_exopeptidase_dim_dom"/>
</dbReference>
<dbReference type="InterPro" id="IPR002933">
    <property type="entry name" value="Peptidase_M20"/>
</dbReference>
<dbReference type="InterPro" id="IPR011650">
    <property type="entry name" value="Peptidase_M20_dimer"/>
</dbReference>
<dbReference type="InterPro" id="IPR010161">
    <property type="entry name" value="Peptidase_M20B"/>
</dbReference>
<dbReference type="NCBIfam" id="TIGR01882">
    <property type="entry name" value="peptidase-T"/>
    <property type="match status" value="1"/>
</dbReference>
<dbReference type="NCBIfam" id="NF003976">
    <property type="entry name" value="PRK05469.1"/>
    <property type="match status" value="1"/>
</dbReference>
<dbReference type="NCBIfam" id="NF009920">
    <property type="entry name" value="PRK13381.1"/>
    <property type="match status" value="1"/>
</dbReference>
<dbReference type="PANTHER" id="PTHR42994">
    <property type="entry name" value="PEPTIDASE T"/>
    <property type="match status" value="1"/>
</dbReference>
<dbReference type="PANTHER" id="PTHR42994:SF1">
    <property type="entry name" value="PEPTIDASE T"/>
    <property type="match status" value="1"/>
</dbReference>
<dbReference type="Pfam" id="PF07687">
    <property type="entry name" value="M20_dimer"/>
    <property type="match status" value="1"/>
</dbReference>
<dbReference type="Pfam" id="PF01546">
    <property type="entry name" value="Peptidase_M20"/>
    <property type="match status" value="1"/>
</dbReference>
<dbReference type="PIRSF" id="PIRSF037215">
    <property type="entry name" value="Peptidase_M20B"/>
    <property type="match status" value="1"/>
</dbReference>
<dbReference type="SUPFAM" id="SSF55031">
    <property type="entry name" value="Bacterial exopeptidase dimerisation domain"/>
    <property type="match status" value="1"/>
</dbReference>
<dbReference type="SUPFAM" id="SSF53187">
    <property type="entry name" value="Zn-dependent exopeptidases"/>
    <property type="match status" value="1"/>
</dbReference>
<dbReference type="PROSITE" id="PS00758">
    <property type="entry name" value="ARGE_DAPE_CPG2_1"/>
    <property type="match status" value="1"/>
</dbReference>
<dbReference type="PROSITE" id="PS00759">
    <property type="entry name" value="ARGE_DAPE_CPG2_2"/>
    <property type="match status" value="1"/>
</dbReference>
<keyword id="KW-0031">Aminopeptidase</keyword>
<keyword id="KW-0963">Cytoplasm</keyword>
<keyword id="KW-0378">Hydrolase</keyword>
<keyword id="KW-0479">Metal-binding</keyword>
<keyword id="KW-0482">Metalloprotease</keyword>
<keyword id="KW-0645">Protease</keyword>
<keyword id="KW-0862">Zinc</keyword>
<evidence type="ECO:0000255" key="1">
    <source>
        <dbReference type="HAMAP-Rule" id="MF_00550"/>
    </source>
</evidence>
<evidence type="ECO:0000305" key="2"/>
<feature type="chain" id="PRO_0000411438" description="Peptidase T">
    <location>
        <begin position="1"/>
        <end position="407"/>
    </location>
</feature>
<feature type="active site" evidence="1">
    <location>
        <position position="84"/>
    </location>
</feature>
<feature type="active site" description="Proton acceptor" evidence="1">
    <location>
        <position position="177"/>
    </location>
</feature>
<feature type="binding site" evidence="1">
    <location>
        <position position="82"/>
    </location>
    <ligand>
        <name>Zn(2+)</name>
        <dbReference type="ChEBI" id="CHEBI:29105"/>
        <label>1</label>
    </ligand>
</feature>
<feature type="binding site" evidence="1">
    <location>
        <position position="143"/>
    </location>
    <ligand>
        <name>Zn(2+)</name>
        <dbReference type="ChEBI" id="CHEBI:29105"/>
        <label>1</label>
    </ligand>
</feature>
<feature type="binding site" evidence="1">
    <location>
        <position position="143"/>
    </location>
    <ligand>
        <name>Zn(2+)</name>
        <dbReference type="ChEBI" id="CHEBI:29105"/>
        <label>2</label>
    </ligand>
</feature>
<feature type="binding site" evidence="1">
    <location>
        <position position="178"/>
    </location>
    <ligand>
        <name>Zn(2+)</name>
        <dbReference type="ChEBI" id="CHEBI:29105"/>
        <label>2</label>
    </ligand>
</feature>
<feature type="binding site" evidence="1">
    <location>
        <position position="200"/>
    </location>
    <ligand>
        <name>Zn(2+)</name>
        <dbReference type="ChEBI" id="CHEBI:29105"/>
        <label>1</label>
    </ligand>
</feature>
<feature type="binding site" evidence="1">
    <location>
        <position position="382"/>
    </location>
    <ligand>
        <name>Zn(2+)</name>
        <dbReference type="ChEBI" id="CHEBI:29105"/>
        <label>2</label>
    </ligand>
</feature>
<accession>P0DD01</accession>
<accession>Q8K802</accession>
<gene>
    <name evidence="1" type="primary">pepT</name>
    <name type="ordered locus">SPs1321</name>
</gene>